<feature type="chain" id="PRO_1000086390" description="DNA-directed RNA polymerase subunit beta'">
    <location>
        <begin position="1"/>
        <end position="1403"/>
    </location>
</feature>
<feature type="binding site" evidence="1">
    <location>
        <position position="71"/>
    </location>
    <ligand>
        <name>Zn(2+)</name>
        <dbReference type="ChEBI" id="CHEBI:29105"/>
        <label>1</label>
    </ligand>
</feature>
<feature type="binding site" evidence="1">
    <location>
        <position position="73"/>
    </location>
    <ligand>
        <name>Zn(2+)</name>
        <dbReference type="ChEBI" id="CHEBI:29105"/>
        <label>1</label>
    </ligand>
</feature>
<feature type="binding site" evidence="1">
    <location>
        <position position="86"/>
    </location>
    <ligand>
        <name>Zn(2+)</name>
        <dbReference type="ChEBI" id="CHEBI:29105"/>
        <label>1</label>
    </ligand>
</feature>
<feature type="binding site" evidence="1">
    <location>
        <position position="89"/>
    </location>
    <ligand>
        <name>Zn(2+)</name>
        <dbReference type="ChEBI" id="CHEBI:29105"/>
        <label>1</label>
    </ligand>
</feature>
<feature type="binding site" evidence="1">
    <location>
        <position position="462"/>
    </location>
    <ligand>
        <name>Mg(2+)</name>
        <dbReference type="ChEBI" id="CHEBI:18420"/>
    </ligand>
</feature>
<feature type="binding site" evidence="1">
    <location>
        <position position="464"/>
    </location>
    <ligand>
        <name>Mg(2+)</name>
        <dbReference type="ChEBI" id="CHEBI:18420"/>
    </ligand>
</feature>
<feature type="binding site" evidence="1">
    <location>
        <position position="466"/>
    </location>
    <ligand>
        <name>Mg(2+)</name>
        <dbReference type="ChEBI" id="CHEBI:18420"/>
    </ligand>
</feature>
<feature type="binding site" evidence="1">
    <location>
        <position position="811"/>
    </location>
    <ligand>
        <name>Zn(2+)</name>
        <dbReference type="ChEBI" id="CHEBI:29105"/>
        <label>2</label>
    </ligand>
</feature>
<feature type="binding site" evidence="1">
    <location>
        <position position="885"/>
    </location>
    <ligand>
        <name>Zn(2+)</name>
        <dbReference type="ChEBI" id="CHEBI:29105"/>
        <label>2</label>
    </ligand>
</feature>
<feature type="binding site" evidence="1">
    <location>
        <position position="892"/>
    </location>
    <ligand>
        <name>Zn(2+)</name>
        <dbReference type="ChEBI" id="CHEBI:29105"/>
        <label>2</label>
    </ligand>
</feature>
<feature type="binding site" evidence="1">
    <location>
        <position position="895"/>
    </location>
    <ligand>
        <name>Zn(2+)</name>
        <dbReference type="ChEBI" id="CHEBI:29105"/>
        <label>2</label>
    </ligand>
</feature>
<name>RPOC_BARBK</name>
<organism>
    <name type="scientific">Bartonella bacilliformis (strain ATCC 35685 / KC583 / Herrer 020/F12,63)</name>
    <dbReference type="NCBI Taxonomy" id="360095"/>
    <lineage>
        <taxon>Bacteria</taxon>
        <taxon>Pseudomonadati</taxon>
        <taxon>Pseudomonadota</taxon>
        <taxon>Alphaproteobacteria</taxon>
        <taxon>Hyphomicrobiales</taxon>
        <taxon>Bartonellaceae</taxon>
        <taxon>Bartonella</taxon>
    </lineage>
</organism>
<dbReference type="EC" id="2.7.7.6" evidence="1"/>
<dbReference type="EMBL" id="CP000524">
    <property type="protein sequence ID" value="ABM45019.1"/>
    <property type="molecule type" value="Genomic_DNA"/>
</dbReference>
<dbReference type="RefSeq" id="WP_005766721.1">
    <property type="nucleotide sequence ID" value="NC_008783.1"/>
</dbReference>
<dbReference type="SMR" id="A1USC9"/>
<dbReference type="STRING" id="360095.BARBAKC583_0572"/>
<dbReference type="GeneID" id="4684810"/>
<dbReference type="KEGG" id="bbk:BARBAKC583_0572"/>
<dbReference type="PATRIC" id="fig|360095.6.peg.553"/>
<dbReference type="eggNOG" id="COG0086">
    <property type="taxonomic scope" value="Bacteria"/>
</dbReference>
<dbReference type="HOGENOM" id="CLU_000524_3_1_5"/>
<dbReference type="OrthoDB" id="9815296at2"/>
<dbReference type="Proteomes" id="UP000000643">
    <property type="component" value="Chromosome"/>
</dbReference>
<dbReference type="GO" id="GO:0000428">
    <property type="term" value="C:DNA-directed RNA polymerase complex"/>
    <property type="evidence" value="ECO:0007669"/>
    <property type="project" value="UniProtKB-KW"/>
</dbReference>
<dbReference type="GO" id="GO:0003677">
    <property type="term" value="F:DNA binding"/>
    <property type="evidence" value="ECO:0007669"/>
    <property type="project" value="UniProtKB-UniRule"/>
</dbReference>
<dbReference type="GO" id="GO:0003899">
    <property type="term" value="F:DNA-directed RNA polymerase activity"/>
    <property type="evidence" value="ECO:0007669"/>
    <property type="project" value="UniProtKB-UniRule"/>
</dbReference>
<dbReference type="GO" id="GO:0000287">
    <property type="term" value="F:magnesium ion binding"/>
    <property type="evidence" value="ECO:0007669"/>
    <property type="project" value="UniProtKB-UniRule"/>
</dbReference>
<dbReference type="GO" id="GO:0008270">
    <property type="term" value="F:zinc ion binding"/>
    <property type="evidence" value="ECO:0007669"/>
    <property type="project" value="UniProtKB-UniRule"/>
</dbReference>
<dbReference type="GO" id="GO:0006351">
    <property type="term" value="P:DNA-templated transcription"/>
    <property type="evidence" value="ECO:0007669"/>
    <property type="project" value="UniProtKB-UniRule"/>
</dbReference>
<dbReference type="CDD" id="cd02655">
    <property type="entry name" value="RNAP_beta'_C"/>
    <property type="match status" value="1"/>
</dbReference>
<dbReference type="CDD" id="cd01609">
    <property type="entry name" value="RNAP_beta'_N"/>
    <property type="match status" value="1"/>
</dbReference>
<dbReference type="FunFam" id="1.10.132.30:FF:000003">
    <property type="entry name" value="DNA-directed RNA polymerase subunit beta"/>
    <property type="match status" value="1"/>
</dbReference>
<dbReference type="Gene3D" id="1.10.132.30">
    <property type="match status" value="1"/>
</dbReference>
<dbReference type="Gene3D" id="1.10.150.390">
    <property type="match status" value="1"/>
</dbReference>
<dbReference type="Gene3D" id="1.10.1790.20">
    <property type="match status" value="1"/>
</dbReference>
<dbReference type="Gene3D" id="1.10.40.90">
    <property type="match status" value="1"/>
</dbReference>
<dbReference type="Gene3D" id="2.40.40.20">
    <property type="match status" value="1"/>
</dbReference>
<dbReference type="Gene3D" id="2.40.50.100">
    <property type="match status" value="3"/>
</dbReference>
<dbReference type="Gene3D" id="4.10.860.120">
    <property type="entry name" value="RNA polymerase II, clamp domain"/>
    <property type="match status" value="1"/>
</dbReference>
<dbReference type="Gene3D" id="1.10.274.100">
    <property type="entry name" value="RNA polymerase Rpb1, domain 3"/>
    <property type="match status" value="2"/>
</dbReference>
<dbReference type="HAMAP" id="MF_01322">
    <property type="entry name" value="RNApol_bact_RpoC"/>
    <property type="match status" value="1"/>
</dbReference>
<dbReference type="InterPro" id="IPR045867">
    <property type="entry name" value="DNA-dir_RpoC_beta_prime"/>
</dbReference>
<dbReference type="InterPro" id="IPR012754">
    <property type="entry name" value="DNA-dir_RpoC_beta_prime_bact"/>
</dbReference>
<dbReference type="InterPro" id="IPR000722">
    <property type="entry name" value="RNA_pol_asu"/>
</dbReference>
<dbReference type="InterPro" id="IPR006592">
    <property type="entry name" value="RNA_pol_N"/>
</dbReference>
<dbReference type="InterPro" id="IPR007080">
    <property type="entry name" value="RNA_pol_Rpb1_1"/>
</dbReference>
<dbReference type="InterPro" id="IPR007066">
    <property type="entry name" value="RNA_pol_Rpb1_3"/>
</dbReference>
<dbReference type="InterPro" id="IPR042102">
    <property type="entry name" value="RNA_pol_Rpb1_3_sf"/>
</dbReference>
<dbReference type="InterPro" id="IPR007083">
    <property type="entry name" value="RNA_pol_Rpb1_4"/>
</dbReference>
<dbReference type="InterPro" id="IPR007081">
    <property type="entry name" value="RNA_pol_Rpb1_5"/>
</dbReference>
<dbReference type="InterPro" id="IPR044893">
    <property type="entry name" value="RNA_pol_Rpb1_clamp_domain"/>
</dbReference>
<dbReference type="InterPro" id="IPR038120">
    <property type="entry name" value="Rpb1_funnel_sf"/>
</dbReference>
<dbReference type="NCBIfam" id="TIGR02386">
    <property type="entry name" value="rpoC_TIGR"/>
    <property type="match status" value="1"/>
</dbReference>
<dbReference type="PANTHER" id="PTHR19376">
    <property type="entry name" value="DNA-DIRECTED RNA POLYMERASE"/>
    <property type="match status" value="1"/>
</dbReference>
<dbReference type="PANTHER" id="PTHR19376:SF54">
    <property type="entry name" value="DNA-DIRECTED RNA POLYMERASE SUBUNIT BETA"/>
    <property type="match status" value="1"/>
</dbReference>
<dbReference type="Pfam" id="PF04997">
    <property type="entry name" value="RNA_pol_Rpb1_1"/>
    <property type="match status" value="1"/>
</dbReference>
<dbReference type="Pfam" id="PF00623">
    <property type="entry name" value="RNA_pol_Rpb1_2"/>
    <property type="match status" value="1"/>
</dbReference>
<dbReference type="Pfam" id="PF04983">
    <property type="entry name" value="RNA_pol_Rpb1_3"/>
    <property type="match status" value="1"/>
</dbReference>
<dbReference type="Pfam" id="PF05000">
    <property type="entry name" value="RNA_pol_Rpb1_4"/>
    <property type="match status" value="1"/>
</dbReference>
<dbReference type="Pfam" id="PF04998">
    <property type="entry name" value="RNA_pol_Rpb1_5"/>
    <property type="match status" value="1"/>
</dbReference>
<dbReference type="SMART" id="SM00663">
    <property type="entry name" value="RPOLA_N"/>
    <property type="match status" value="1"/>
</dbReference>
<dbReference type="SUPFAM" id="SSF64484">
    <property type="entry name" value="beta and beta-prime subunits of DNA dependent RNA-polymerase"/>
    <property type="match status" value="1"/>
</dbReference>
<protein>
    <recommendedName>
        <fullName evidence="1">DNA-directed RNA polymerase subunit beta'</fullName>
        <shortName evidence="1">RNAP subunit beta'</shortName>
        <ecNumber evidence="1">2.7.7.6</ecNumber>
    </recommendedName>
    <alternativeName>
        <fullName evidence="1">RNA polymerase subunit beta'</fullName>
    </alternativeName>
    <alternativeName>
        <fullName evidence="1">Transcriptase subunit beta'</fullName>
    </alternativeName>
</protein>
<gene>
    <name evidence="1" type="primary">rpoC</name>
    <name type="ordered locus">BARBAKC583_0572</name>
</gene>
<reference key="1">
    <citation type="submission" date="2006-12" db="EMBL/GenBank/DDBJ databases">
        <authorList>
            <person name="Hendrix L."/>
            <person name="Mohamoud Y."/>
            <person name="Radune D."/>
            <person name="Shvartsbeyn A."/>
            <person name="Daugherty S."/>
            <person name="Dodson R."/>
            <person name="Durkin A.S."/>
            <person name="Harkins D."/>
            <person name="Huot H."/>
            <person name="Kothari S.P."/>
            <person name="Madupu R."/>
            <person name="Li J."/>
            <person name="Nelson W.C."/>
            <person name="Shrivastava S."/>
            <person name="Giglio M.G."/>
            <person name="Haft D."/>
            <person name="Selengut J."/>
            <person name="Fraser-Ligget C."/>
            <person name="Seshadri R."/>
        </authorList>
    </citation>
    <scope>NUCLEOTIDE SEQUENCE [LARGE SCALE GENOMIC DNA]</scope>
    <source>
        <strain>ATCC 35685 / KC583 / Herrer 020/F12,63</strain>
    </source>
</reference>
<accession>A1USC9</accession>
<proteinExistence type="inferred from homology"/>
<sequence length="1403" mass="156009">MNHEVMNLFNPQALAQIFDSIRISIASPENILSWSYGEIKKPETINYRTFKPERDGLFCARIFGPIKDYECLCGKYKRMKYKGIICEKCGVEVTLSRVRRERMGHIELAAPVAHIWFLKSLPGRISTLLDLTLKDIERILYFESYIVTEPGLTSLKLHQLLSEEEYMLAIDKFGEDQFTAMIGAEAIYDLLAGMELDKIANDLHAELAETTSELKQKKLIKRLKIVENFLESGNKPEWMIMKTIPVIPPDLRPLVPLDGGRFATSDLNDLYRRVINRNNRLKRLIELRAPGIIVRNEKRMVQEAVDALFDNGRRGRVITGANKRPLKSLSDMLKGKQGRFRQNLLGKRVDYSGRSVIVTGPELKLHQCGLPKKMALELFKPFIYARLDAKGYSSTVKQAKKLVEKEHPEVWDILDEVIREHPVLLNRAPTLHRLGIQAFEPVLIEGKAIQLHPLVCTAFNADFDGDQMAVHVPLSLEAQLEARVLMMSTNNILHPANGAPIIVPSQDMVLGLYYLSIVSEKEPGEGMAFADMGELHHALENKVVTLHTKIKGRFKNIDKDGKEVAQLYDTTPGRLIIGELLPKNPNISFDIVNQEMTKKNLSKMIDQVYRHCGQKETVVFCDRIMQLGFSHACRAGISFGKDDMVIPESKSRLVAETEALVKEYEQQYDDGLITQGEKYNKVVDAWGKCTDRIADEMMKGIQAVKFDPKTGRQQRMNSIYMMSHSGARGSANQMRQLAGMRGLMAKPSGEIIETPIISNFKEGLTVNEYFNSTHGARKGLADTALKTANSGYLTRRLVDVAQDAIISAVDCGTIKGLTMQPIIDAGQIVASLGQRILGRTALLDILHPVSGEVIIEGGTMIEEADVLKIEEARIQSVQIRSALTCETRLGVCAKCYGRDLARGTPVNQGEAVGVIAAQSIGEPGTQLTMRTFHLGGTAQVVDSSYFESSYEGIVELRNRNVVRNSEGHLVVMGRNMAVLIKDENGKERAVHRISYGARLFVDDGDIIKRGQRIAEWDPYTRPILTEVDGYVGFEDMVDGLSVTETTDESTGITKRQVIDWRVNPRGADLKPAMIIHSDKQGKNIAKLHKGGEARYVMSVETILSVEPGSHVKAGDVIARLPMESAKTKDITGGLPRVAELFEARRPKDHAIIAEISGTVRFGRGYKNKRRIIIEPNDETLEPVEYLIPKGKLFHLQEGDKIEKGDYILDGNPAPHDILAIKGVEALASYLVNEIQEVYRLQGVLINDKHIEVIVRQMLQKVEITESGDSDYIPGDNVDRIELDEINDHLIAEGKKPASGTPILLGITKASLQTPSFISAASFQETTRVLTEAAVSGKIDTLQGLKENVIVGRLIPAGTGGTIAQIRRIATVRDDLIVDEQRKSSNDGISKAMLTDMTANAAAE</sequence>
<comment type="function">
    <text evidence="1">DNA-dependent RNA polymerase catalyzes the transcription of DNA into RNA using the four ribonucleoside triphosphates as substrates.</text>
</comment>
<comment type="catalytic activity">
    <reaction evidence="1">
        <text>RNA(n) + a ribonucleoside 5'-triphosphate = RNA(n+1) + diphosphate</text>
        <dbReference type="Rhea" id="RHEA:21248"/>
        <dbReference type="Rhea" id="RHEA-COMP:14527"/>
        <dbReference type="Rhea" id="RHEA-COMP:17342"/>
        <dbReference type="ChEBI" id="CHEBI:33019"/>
        <dbReference type="ChEBI" id="CHEBI:61557"/>
        <dbReference type="ChEBI" id="CHEBI:140395"/>
        <dbReference type="EC" id="2.7.7.6"/>
    </reaction>
</comment>
<comment type="cofactor">
    <cofactor evidence="1">
        <name>Mg(2+)</name>
        <dbReference type="ChEBI" id="CHEBI:18420"/>
    </cofactor>
    <text evidence="1">Binds 1 Mg(2+) ion per subunit.</text>
</comment>
<comment type="cofactor">
    <cofactor evidence="1">
        <name>Zn(2+)</name>
        <dbReference type="ChEBI" id="CHEBI:29105"/>
    </cofactor>
    <text evidence="1">Binds 2 Zn(2+) ions per subunit.</text>
</comment>
<comment type="subunit">
    <text evidence="1">The RNAP catalytic core consists of 2 alpha, 1 beta, 1 beta' and 1 omega subunit. When a sigma factor is associated with the core the holoenzyme is formed, which can initiate transcription.</text>
</comment>
<comment type="similarity">
    <text evidence="1">Belongs to the RNA polymerase beta' chain family.</text>
</comment>
<keyword id="KW-0240">DNA-directed RNA polymerase</keyword>
<keyword id="KW-0460">Magnesium</keyword>
<keyword id="KW-0479">Metal-binding</keyword>
<keyword id="KW-0548">Nucleotidyltransferase</keyword>
<keyword id="KW-0804">Transcription</keyword>
<keyword id="KW-0808">Transferase</keyword>
<keyword id="KW-0862">Zinc</keyword>
<evidence type="ECO:0000255" key="1">
    <source>
        <dbReference type="HAMAP-Rule" id="MF_01322"/>
    </source>
</evidence>